<gene>
    <name evidence="1" type="primary">ubiC</name>
    <name type="ordered locus">UTI89_C4609</name>
</gene>
<feature type="chain" id="PRO_0000255907" description="Chorismate pyruvate-lyase">
    <location>
        <begin position="1"/>
        <end position="165"/>
    </location>
</feature>
<feature type="binding site" evidence="1">
    <location>
        <position position="35"/>
    </location>
    <ligand>
        <name>substrate</name>
    </ligand>
</feature>
<feature type="binding site" evidence="1">
    <location>
        <position position="77"/>
    </location>
    <ligand>
        <name>substrate</name>
    </ligand>
</feature>
<feature type="binding site" evidence="1">
    <location>
        <position position="115"/>
    </location>
    <ligand>
        <name>substrate</name>
    </ligand>
</feature>
<feature type="binding site" evidence="1">
    <location>
        <position position="156"/>
    </location>
    <ligand>
        <name>substrate</name>
    </ligand>
</feature>
<dbReference type="EC" id="4.1.3.40" evidence="1"/>
<dbReference type="EMBL" id="CP000243">
    <property type="protein sequence ID" value="ABE10017.1"/>
    <property type="molecule type" value="Genomic_DNA"/>
</dbReference>
<dbReference type="RefSeq" id="WP_000019227.1">
    <property type="nucleotide sequence ID" value="NZ_CP064825.1"/>
</dbReference>
<dbReference type="SMR" id="Q1R3P7"/>
<dbReference type="KEGG" id="eci:UTI89_C4609"/>
<dbReference type="HOGENOM" id="CLU_096824_1_0_6"/>
<dbReference type="UniPathway" id="UPA00232"/>
<dbReference type="Proteomes" id="UP000001952">
    <property type="component" value="Chromosome"/>
</dbReference>
<dbReference type="GO" id="GO:0005829">
    <property type="term" value="C:cytosol"/>
    <property type="evidence" value="ECO:0007669"/>
    <property type="project" value="TreeGrafter"/>
</dbReference>
<dbReference type="GO" id="GO:0008813">
    <property type="term" value="F:chorismate lyase activity"/>
    <property type="evidence" value="ECO:0007669"/>
    <property type="project" value="UniProtKB-UniRule"/>
</dbReference>
<dbReference type="GO" id="GO:0042866">
    <property type="term" value="P:pyruvate biosynthetic process"/>
    <property type="evidence" value="ECO:0007669"/>
    <property type="project" value="UniProtKB-UniRule"/>
</dbReference>
<dbReference type="GO" id="GO:0006744">
    <property type="term" value="P:ubiquinone biosynthetic process"/>
    <property type="evidence" value="ECO:0007669"/>
    <property type="project" value="UniProtKB-UniRule"/>
</dbReference>
<dbReference type="FunFam" id="3.40.1410.10:FF:000002">
    <property type="entry name" value="Chorismate pyruvate-lyase"/>
    <property type="match status" value="1"/>
</dbReference>
<dbReference type="Gene3D" id="3.40.1410.10">
    <property type="entry name" value="Chorismate lyase-like"/>
    <property type="match status" value="1"/>
</dbReference>
<dbReference type="HAMAP" id="MF_01632">
    <property type="entry name" value="UbiC"/>
    <property type="match status" value="1"/>
</dbReference>
<dbReference type="InterPro" id="IPR007440">
    <property type="entry name" value="Chorismate--pyruvate_lyase"/>
</dbReference>
<dbReference type="InterPro" id="IPR028978">
    <property type="entry name" value="Chorismate_lyase_/UTRA_dom_sf"/>
</dbReference>
<dbReference type="NCBIfam" id="NF008656">
    <property type="entry name" value="PRK11655.1"/>
    <property type="match status" value="1"/>
</dbReference>
<dbReference type="PANTHER" id="PTHR38683">
    <property type="entry name" value="CHORISMATE PYRUVATE-LYASE"/>
    <property type="match status" value="1"/>
</dbReference>
<dbReference type="PANTHER" id="PTHR38683:SF1">
    <property type="entry name" value="CHORISMATE PYRUVATE-LYASE"/>
    <property type="match status" value="1"/>
</dbReference>
<dbReference type="Pfam" id="PF04345">
    <property type="entry name" value="Chor_lyase"/>
    <property type="match status" value="1"/>
</dbReference>
<dbReference type="SUPFAM" id="SSF64288">
    <property type="entry name" value="Chorismate lyase-like"/>
    <property type="match status" value="1"/>
</dbReference>
<accession>Q1R3P7</accession>
<evidence type="ECO:0000255" key="1">
    <source>
        <dbReference type="HAMAP-Rule" id="MF_01632"/>
    </source>
</evidence>
<reference key="1">
    <citation type="journal article" date="2006" name="Proc. Natl. Acad. Sci. U.S.A.">
        <title>Identification of genes subject to positive selection in uropathogenic strains of Escherichia coli: a comparative genomics approach.</title>
        <authorList>
            <person name="Chen S.L."/>
            <person name="Hung C.-S."/>
            <person name="Xu J."/>
            <person name="Reigstad C.S."/>
            <person name="Magrini V."/>
            <person name="Sabo A."/>
            <person name="Blasiar D."/>
            <person name="Bieri T."/>
            <person name="Meyer R.R."/>
            <person name="Ozersky P."/>
            <person name="Armstrong J.R."/>
            <person name="Fulton R.S."/>
            <person name="Latreille J.P."/>
            <person name="Spieth J."/>
            <person name="Hooton T.M."/>
            <person name="Mardis E.R."/>
            <person name="Hultgren S.J."/>
            <person name="Gordon J.I."/>
        </authorList>
    </citation>
    <scope>NUCLEOTIDE SEQUENCE [LARGE SCALE GENOMIC DNA]</scope>
    <source>
        <strain>UTI89 / UPEC</strain>
    </source>
</reference>
<keyword id="KW-0963">Cytoplasm</keyword>
<keyword id="KW-0456">Lyase</keyword>
<keyword id="KW-0670">Pyruvate</keyword>
<keyword id="KW-0831">Ubiquinone biosynthesis</keyword>
<name>UBIC_ECOUT</name>
<sequence>MSHPALTQLRALRYFTEIPALEPQLLDWLLLEDSMTKRFEQQGKTVSVTMIREGFVEQNEIPEELPLLPKESRYWLREILLCADGEPWLAGRTVVPVSTLSGPELALQKLGKTPLGRYLFTSSTLTRDFIEIGRDAGLWGRRSRLRLSGKPLLLTELFLPASPLY</sequence>
<organism>
    <name type="scientific">Escherichia coli (strain UTI89 / UPEC)</name>
    <dbReference type="NCBI Taxonomy" id="364106"/>
    <lineage>
        <taxon>Bacteria</taxon>
        <taxon>Pseudomonadati</taxon>
        <taxon>Pseudomonadota</taxon>
        <taxon>Gammaproteobacteria</taxon>
        <taxon>Enterobacterales</taxon>
        <taxon>Enterobacteriaceae</taxon>
        <taxon>Escherichia</taxon>
    </lineage>
</organism>
<proteinExistence type="inferred from homology"/>
<protein>
    <recommendedName>
        <fullName evidence="1">Chorismate pyruvate-lyase</fullName>
        <shortName evidence="1">CL</shortName>
        <shortName evidence="1">CPL</shortName>
        <ecNumber evidence="1">4.1.3.40</ecNumber>
    </recommendedName>
</protein>
<comment type="function">
    <text evidence="1">Removes the pyruvyl group from chorismate, with concomitant aromatization of the ring, to provide 4-hydroxybenzoate (4HB) for the ubiquinone pathway.</text>
</comment>
<comment type="catalytic activity">
    <reaction evidence="1">
        <text>chorismate = 4-hydroxybenzoate + pyruvate</text>
        <dbReference type="Rhea" id="RHEA:16505"/>
        <dbReference type="ChEBI" id="CHEBI:15361"/>
        <dbReference type="ChEBI" id="CHEBI:17879"/>
        <dbReference type="ChEBI" id="CHEBI:29748"/>
        <dbReference type="EC" id="4.1.3.40"/>
    </reaction>
</comment>
<comment type="pathway">
    <text evidence="1">Cofactor biosynthesis; ubiquinone biosynthesis.</text>
</comment>
<comment type="subunit">
    <text evidence="1">Monomer.</text>
</comment>
<comment type="subcellular location">
    <subcellularLocation>
        <location evidence="1">Cytoplasm</location>
    </subcellularLocation>
</comment>
<comment type="similarity">
    <text evidence="1">Belongs to the UbiC family.</text>
</comment>